<accession>Q839G3</accession>
<gene>
    <name evidence="1" type="primary">rplD</name>
    <name type="ordered locus">EF_0207</name>
</gene>
<sequence>MPNVALFKQDGTQNGEITLNEEIFGIEPNESVVYDAIIMQRASLRQGTHAVKNRSAVRGGGRKPWRQKGTGRARQGSIRSPQWRGGGVVFGPTPRSYSYKFPKKVRRLAMKSVLSDKVAENNLVAVEGLSFDAPKTKEFKQVLANLSIDTKVLVVLENGNDFAALSARNLPNVSVVTSDNVSVLDVVSANKVLATQTALTQIEEVLA</sequence>
<protein>
    <recommendedName>
        <fullName evidence="1">Large ribosomal subunit protein uL4</fullName>
    </recommendedName>
    <alternativeName>
        <fullName evidence="3">50S ribosomal protein L4</fullName>
    </alternativeName>
</protein>
<proteinExistence type="evidence at protein level"/>
<feature type="chain" id="PRO_0000129218" description="Large ribosomal subunit protein uL4">
    <location>
        <begin position="1"/>
        <end position="207"/>
    </location>
</feature>
<feature type="region of interest" description="Disordered" evidence="2">
    <location>
        <begin position="49"/>
        <end position="78"/>
    </location>
</feature>
<feature type="compositionally biased region" description="Basic residues" evidence="2">
    <location>
        <begin position="60"/>
        <end position="71"/>
    </location>
</feature>
<feature type="strand" evidence="4">
    <location>
        <begin position="3"/>
        <end position="7"/>
    </location>
</feature>
<feature type="strand" evidence="4">
    <location>
        <begin position="16"/>
        <end position="18"/>
    </location>
</feature>
<feature type="turn" evidence="4">
    <location>
        <begin position="21"/>
        <end position="23"/>
    </location>
</feature>
<feature type="strand" evidence="4">
    <location>
        <begin position="24"/>
        <end position="26"/>
    </location>
</feature>
<feature type="helix" evidence="4">
    <location>
        <begin position="30"/>
        <end position="42"/>
    </location>
</feature>
<feature type="turn" evidence="4">
    <location>
        <begin position="54"/>
        <end position="56"/>
    </location>
</feature>
<feature type="strand" evidence="4">
    <location>
        <begin position="67"/>
        <end position="72"/>
    </location>
</feature>
<feature type="strand" evidence="4">
    <location>
        <begin position="78"/>
        <end position="80"/>
    </location>
</feature>
<feature type="helix" evidence="4">
    <location>
        <begin position="103"/>
        <end position="118"/>
    </location>
</feature>
<feature type="turn" evidence="4">
    <location>
        <begin position="119"/>
        <end position="121"/>
    </location>
</feature>
<feature type="strand" evidence="4">
    <location>
        <begin position="123"/>
        <end position="127"/>
    </location>
</feature>
<feature type="helix" evidence="4">
    <location>
        <begin position="136"/>
        <end position="145"/>
    </location>
</feature>
<feature type="strand" evidence="4">
    <location>
        <begin position="152"/>
        <end position="156"/>
    </location>
</feature>
<feature type="helix" evidence="4">
    <location>
        <begin position="161"/>
        <end position="167"/>
    </location>
</feature>
<feature type="strand" evidence="4">
    <location>
        <begin position="173"/>
        <end position="177"/>
    </location>
</feature>
<feature type="helix" evidence="4">
    <location>
        <begin position="183"/>
        <end position="188"/>
    </location>
</feature>
<feature type="strand" evidence="4">
    <location>
        <begin position="189"/>
        <end position="195"/>
    </location>
</feature>
<feature type="helix" evidence="4">
    <location>
        <begin position="196"/>
        <end position="206"/>
    </location>
</feature>
<name>RL4_ENTFA</name>
<comment type="function">
    <text evidence="1">One of the primary rRNA binding proteins, this protein initially binds near the 5'-end of the 23S rRNA. It is important during the early stages of 50S assembly. It makes multiple contacts with different domains of the 23S rRNA in the assembled 50S subunit and ribosome.</text>
</comment>
<comment type="function">
    <text evidence="1">Forms part of the polypeptide exit tunnel.</text>
</comment>
<comment type="subunit">
    <text evidence="1">Part of the 50S ribosomal subunit.</text>
</comment>
<comment type="similarity">
    <text evidence="1">Belongs to the universal ribosomal protein uL4 family.</text>
</comment>
<reference key="1">
    <citation type="journal article" date="2003" name="Science">
        <title>Role of mobile DNA in the evolution of vancomycin-resistant Enterococcus faecalis.</title>
        <authorList>
            <person name="Paulsen I.T."/>
            <person name="Banerjei L."/>
            <person name="Myers G.S.A."/>
            <person name="Nelson K.E."/>
            <person name="Seshadri R."/>
            <person name="Read T.D."/>
            <person name="Fouts D.E."/>
            <person name="Eisen J.A."/>
            <person name="Gill S.R."/>
            <person name="Heidelberg J.F."/>
            <person name="Tettelin H."/>
            <person name="Dodson R.J."/>
            <person name="Umayam L.A."/>
            <person name="Brinkac L.M."/>
            <person name="Beanan M.J."/>
            <person name="Daugherty S.C."/>
            <person name="DeBoy R.T."/>
            <person name="Durkin S.A."/>
            <person name="Kolonay J.F."/>
            <person name="Madupu R."/>
            <person name="Nelson W.C."/>
            <person name="Vamathevan J.J."/>
            <person name="Tran B."/>
            <person name="Upton J."/>
            <person name="Hansen T."/>
            <person name="Shetty J."/>
            <person name="Khouri H.M."/>
            <person name="Utterback T.R."/>
            <person name="Radune D."/>
            <person name="Ketchum K.A."/>
            <person name="Dougherty B.A."/>
            <person name="Fraser C.M."/>
        </authorList>
    </citation>
    <scope>NUCLEOTIDE SEQUENCE [LARGE SCALE GENOMIC DNA]</scope>
    <source>
        <strain>ATCC 700802 / V583</strain>
    </source>
</reference>
<organism>
    <name type="scientific">Enterococcus faecalis (strain ATCC 700802 / V583)</name>
    <dbReference type="NCBI Taxonomy" id="226185"/>
    <lineage>
        <taxon>Bacteria</taxon>
        <taxon>Bacillati</taxon>
        <taxon>Bacillota</taxon>
        <taxon>Bacilli</taxon>
        <taxon>Lactobacillales</taxon>
        <taxon>Enterococcaceae</taxon>
        <taxon>Enterococcus</taxon>
    </lineage>
</organism>
<dbReference type="EMBL" id="AE016830">
    <property type="protein sequence ID" value="AAO80076.1"/>
    <property type="molecule type" value="Genomic_DNA"/>
</dbReference>
<dbReference type="RefSeq" id="NP_814005.1">
    <property type="nucleotide sequence ID" value="NC_004668.1"/>
</dbReference>
<dbReference type="RefSeq" id="WP_010774252.1">
    <property type="nucleotide sequence ID" value="NZ_KE136524.1"/>
</dbReference>
<dbReference type="PDB" id="6WU9">
    <property type="method" value="EM"/>
    <property type="resolution" value="2.90 A"/>
    <property type="chains" value="E=2-207"/>
</dbReference>
<dbReference type="PDB" id="7P7Q">
    <property type="method" value="EM"/>
    <property type="resolution" value="2.40 A"/>
    <property type="chains" value="I=1-207"/>
</dbReference>
<dbReference type="PDB" id="7P7R">
    <property type="method" value="EM"/>
    <property type="resolution" value="2.90 A"/>
    <property type="chains" value="I=1-207"/>
</dbReference>
<dbReference type="PDB" id="7P7S">
    <property type="method" value="EM"/>
    <property type="resolution" value="3.00 A"/>
    <property type="chains" value="I=1-207"/>
</dbReference>
<dbReference type="PDB" id="7P7T">
    <property type="method" value="EM"/>
    <property type="resolution" value="2.90 A"/>
    <property type="chains" value="I=1-207"/>
</dbReference>
<dbReference type="PDB" id="7P7U">
    <property type="method" value="EM"/>
    <property type="resolution" value="3.10 A"/>
    <property type="chains" value="I=1-207"/>
</dbReference>
<dbReference type="PDBsum" id="6WU9"/>
<dbReference type="PDBsum" id="7P7Q"/>
<dbReference type="PDBsum" id="7P7R"/>
<dbReference type="PDBsum" id="7P7S"/>
<dbReference type="PDBsum" id="7P7T"/>
<dbReference type="PDBsum" id="7P7U"/>
<dbReference type="EMDB" id="EMD-13241"/>
<dbReference type="EMDB" id="EMD-13242"/>
<dbReference type="EMDB" id="EMD-13243"/>
<dbReference type="EMDB" id="EMD-13244"/>
<dbReference type="EMDB" id="EMD-13245"/>
<dbReference type="SMR" id="Q839G3"/>
<dbReference type="STRING" id="226185.EF_0207"/>
<dbReference type="EnsemblBacteria" id="AAO80076">
    <property type="protein sequence ID" value="AAO80076"/>
    <property type="gene ID" value="EF_0207"/>
</dbReference>
<dbReference type="KEGG" id="efa:EF0207"/>
<dbReference type="PATRIC" id="fig|226185.45.peg.59"/>
<dbReference type="eggNOG" id="COG0088">
    <property type="taxonomic scope" value="Bacteria"/>
</dbReference>
<dbReference type="HOGENOM" id="CLU_041575_5_2_9"/>
<dbReference type="Proteomes" id="UP000001415">
    <property type="component" value="Chromosome"/>
</dbReference>
<dbReference type="GO" id="GO:1990904">
    <property type="term" value="C:ribonucleoprotein complex"/>
    <property type="evidence" value="ECO:0007669"/>
    <property type="project" value="UniProtKB-KW"/>
</dbReference>
<dbReference type="GO" id="GO:0005840">
    <property type="term" value="C:ribosome"/>
    <property type="evidence" value="ECO:0007669"/>
    <property type="project" value="UniProtKB-KW"/>
</dbReference>
<dbReference type="GO" id="GO:0019843">
    <property type="term" value="F:rRNA binding"/>
    <property type="evidence" value="ECO:0007669"/>
    <property type="project" value="UniProtKB-UniRule"/>
</dbReference>
<dbReference type="GO" id="GO:0003735">
    <property type="term" value="F:structural constituent of ribosome"/>
    <property type="evidence" value="ECO:0007669"/>
    <property type="project" value="InterPro"/>
</dbReference>
<dbReference type="GO" id="GO:0006412">
    <property type="term" value="P:translation"/>
    <property type="evidence" value="ECO:0007669"/>
    <property type="project" value="UniProtKB-UniRule"/>
</dbReference>
<dbReference type="FunFam" id="3.40.1370.10:FF:000003">
    <property type="entry name" value="50S ribosomal protein L4"/>
    <property type="match status" value="1"/>
</dbReference>
<dbReference type="Gene3D" id="3.40.1370.10">
    <property type="match status" value="1"/>
</dbReference>
<dbReference type="HAMAP" id="MF_01328_B">
    <property type="entry name" value="Ribosomal_uL4_B"/>
    <property type="match status" value="1"/>
</dbReference>
<dbReference type="InterPro" id="IPR002136">
    <property type="entry name" value="Ribosomal_uL4"/>
</dbReference>
<dbReference type="InterPro" id="IPR013005">
    <property type="entry name" value="Ribosomal_uL4-like"/>
</dbReference>
<dbReference type="InterPro" id="IPR023574">
    <property type="entry name" value="Ribosomal_uL4_dom_sf"/>
</dbReference>
<dbReference type="NCBIfam" id="TIGR03953">
    <property type="entry name" value="rplD_bact"/>
    <property type="match status" value="1"/>
</dbReference>
<dbReference type="PANTHER" id="PTHR10746">
    <property type="entry name" value="50S RIBOSOMAL PROTEIN L4"/>
    <property type="match status" value="1"/>
</dbReference>
<dbReference type="PANTHER" id="PTHR10746:SF6">
    <property type="entry name" value="LARGE RIBOSOMAL SUBUNIT PROTEIN UL4M"/>
    <property type="match status" value="1"/>
</dbReference>
<dbReference type="Pfam" id="PF00573">
    <property type="entry name" value="Ribosomal_L4"/>
    <property type="match status" value="1"/>
</dbReference>
<dbReference type="SUPFAM" id="SSF52166">
    <property type="entry name" value="Ribosomal protein L4"/>
    <property type="match status" value="1"/>
</dbReference>
<keyword id="KW-0002">3D-structure</keyword>
<keyword id="KW-1185">Reference proteome</keyword>
<keyword id="KW-0687">Ribonucleoprotein</keyword>
<keyword id="KW-0689">Ribosomal protein</keyword>
<keyword id="KW-0694">RNA-binding</keyword>
<keyword id="KW-0699">rRNA-binding</keyword>
<evidence type="ECO:0000255" key="1">
    <source>
        <dbReference type="HAMAP-Rule" id="MF_01328"/>
    </source>
</evidence>
<evidence type="ECO:0000256" key="2">
    <source>
        <dbReference type="SAM" id="MobiDB-lite"/>
    </source>
</evidence>
<evidence type="ECO:0000305" key="3"/>
<evidence type="ECO:0007829" key="4">
    <source>
        <dbReference type="PDB" id="6WU9"/>
    </source>
</evidence>